<sequence length="95" mass="11223">MVRIRLTRMGKKKQPFYRIVVVDQRKRRDGAYIESLGYYDPIKDPYILNVDVDKAVDWILKGAQPSQTVKNLLRKAGVFKKVDEIKRTKKKEENQ</sequence>
<comment type="similarity">
    <text evidence="1">Belongs to the bacterial ribosomal protein bS16 family.</text>
</comment>
<feature type="chain" id="PRO_1000049371" description="Small ribosomal subunit protein bS16">
    <location>
        <begin position="1"/>
        <end position="95"/>
    </location>
</feature>
<evidence type="ECO:0000255" key="1">
    <source>
        <dbReference type="HAMAP-Rule" id="MF_00385"/>
    </source>
</evidence>
<evidence type="ECO:0000305" key="2"/>
<keyword id="KW-0687">Ribonucleoprotein</keyword>
<keyword id="KW-0689">Ribosomal protein</keyword>
<accession>A6LNY9</accession>
<name>RS16_THEM4</name>
<reference key="1">
    <citation type="submission" date="2007-05" db="EMBL/GenBank/DDBJ databases">
        <title>Complete sequence of Thermosipho melanesiensis BI429.</title>
        <authorList>
            <consortium name="US DOE Joint Genome Institute"/>
            <person name="Copeland A."/>
            <person name="Lucas S."/>
            <person name="Lapidus A."/>
            <person name="Barry K."/>
            <person name="Glavina del Rio T."/>
            <person name="Dalin E."/>
            <person name="Tice H."/>
            <person name="Pitluck S."/>
            <person name="Chertkov O."/>
            <person name="Brettin T."/>
            <person name="Bruce D."/>
            <person name="Detter J.C."/>
            <person name="Han C."/>
            <person name="Schmutz J."/>
            <person name="Larimer F."/>
            <person name="Land M."/>
            <person name="Hauser L."/>
            <person name="Kyrpides N."/>
            <person name="Mikhailova N."/>
            <person name="Nelson K."/>
            <person name="Gogarten J.P."/>
            <person name="Noll K."/>
            <person name="Richardson P."/>
        </authorList>
    </citation>
    <scope>NUCLEOTIDE SEQUENCE [LARGE SCALE GENOMIC DNA]</scope>
    <source>
        <strain>DSM 12029 / CIP 104789 / BI429</strain>
    </source>
</reference>
<organism>
    <name type="scientific">Thermosipho melanesiensis (strain DSM 12029 / CIP 104789 / BI429)</name>
    <dbReference type="NCBI Taxonomy" id="391009"/>
    <lineage>
        <taxon>Bacteria</taxon>
        <taxon>Thermotogati</taxon>
        <taxon>Thermotogota</taxon>
        <taxon>Thermotogae</taxon>
        <taxon>Thermotogales</taxon>
        <taxon>Fervidobacteriaceae</taxon>
        <taxon>Thermosipho</taxon>
    </lineage>
</organism>
<gene>
    <name evidence="1" type="primary">rpsP</name>
    <name type="ordered locus">Tmel_1805</name>
</gene>
<dbReference type="EMBL" id="CP000716">
    <property type="protein sequence ID" value="ABR31640.1"/>
    <property type="molecule type" value="Genomic_DNA"/>
</dbReference>
<dbReference type="RefSeq" id="WP_012057998.1">
    <property type="nucleotide sequence ID" value="NC_009616.1"/>
</dbReference>
<dbReference type="SMR" id="A6LNY9"/>
<dbReference type="STRING" id="391009.Tmel_1805"/>
<dbReference type="KEGG" id="tme:Tmel_1805"/>
<dbReference type="eggNOG" id="COG0228">
    <property type="taxonomic scope" value="Bacteria"/>
</dbReference>
<dbReference type="HOGENOM" id="CLU_100590_5_2_0"/>
<dbReference type="OrthoDB" id="9807878at2"/>
<dbReference type="Proteomes" id="UP000001110">
    <property type="component" value="Chromosome"/>
</dbReference>
<dbReference type="GO" id="GO:0005737">
    <property type="term" value="C:cytoplasm"/>
    <property type="evidence" value="ECO:0007669"/>
    <property type="project" value="UniProtKB-ARBA"/>
</dbReference>
<dbReference type="GO" id="GO:0015935">
    <property type="term" value="C:small ribosomal subunit"/>
    <property type="evidence" value="ECO:0007669"/>
    <property type="project" value="TreeGrafter"/>
</dbReference>
<dbReference type="GO" id="GO:0003735">
    <property type="term" value="F:structural constituent of ribosome"/>
    <property type="evidence" value="ECO:0007669"/>
    <property type="project" value="InterPro"/>
</dbReference>
<dbReference type="GO" id="GO:0006412">
    <property type="term" value="P:translation"/>
    <property type="evidence" value="ECO:0007669"/>
    <property type="project" value="UniProtKB-UniRule"/>
</dbReference>
<dbReference type="FunFam" id="3.30.1320.10:FF:000005">
    <property type="entry name" value="30S ribosomal protein S16"/>
    <property type="match status" value="1"/>
</dbReference>
<dbReference type="Gene3D" id="3.30.1320.10">
    <property type="match status" value="1"/>
</dbReference>
<dbReference type="HAMAP" id="MF_00385">
    <property type="entry name" value="Ribosomal_bS16"/>
    <property type="match status" value="1"/>
</dbReference>
<dbReference type="InterPro" id="IPR000307">
    <property type="entry name" value="Ribosomal_bS16"/>
</dbReference>
<dbReference type="InterPro" id="IPR020592">
    <property type="entry name" value="Ribosomal_bS16_CS"/>
</dbReference>
<dbReference type="InterPro" id="IPR023803">
    <property type="entry name" value="Ribosomal_bS16_dom_sf"/>
</dbReference>
<dbReference type="NCBIfam" id="TIGR00002">
    <property type="entry name" value="S16"/>
    <property type="match status" value="1"/>
</dbReference>
<dbReference type="PANTHER" id="PTHR12919">
    <property type="entry name" value="30S RIBOSOMAL PROTEIN S16"/>
    <property type="match status" value="1"/>
</dbReference>
<dbReference type="PANTHER" id="PTHR12919:SF20">
    <property type="entry name" value="SMALL RIBOSOMAL SUBUNIT PROTEIN BS16M"/>
    <property type="match status" value="1"/>
</dbReference>
<dbReference type="Pfam" id="PF00886">
    <property type="entry name" value="Ribosomal_S16"/>
    <property type="match status" value="1"/>
</dbReference>
<dbReference type="SUPFAM" id="SSF54565">
    <property type="entry name" value="Ribosomal protein S16"/>
    <property type="match status" value="1"/>
</dbReference>
<dbReference type="PROSITE" id="PS00732">
    <property type="entry name" value="RIBOSOMAL_S16"/>
    <property type="match status" value="1"/>
</dbReference>
<protein>
    <recommendedName>
        <fullName evidence="1">Small ribosomal subunit protein bS16</fullName>
    </recommendedName>
    <alternativeName>
        <fullName evidence="2">30S ribosomal protein S16</fullName>
    </alternativeName>
</protein>
<proteinExistence type="inferred from homology"/>